<reference key="1">
    <citation type="journal article" date="2009" name="Nat. Genet.">
        <title>Comparative genomic and phylogeographic analysis of Mycobacterium leprae.</title>
        <authorList>
            <person name="Monot M."/>
            <person name="Honore N."/>
            <person name="Garnier T."/>
            <person name="Zidane N."/>
            <person name="Sherafi D."/>
            <person name="Paniz-Mondolfi A."/>
            <person name="Matsuoka M."/>
            <person name="Taylor G.M."/>
            <person name="Donoghue H.D."/>
            <person name="Bouwman A."/>
            <person name="Mays S."/>
            <person name="Watson C."/>
            <person name="Lockwood D."/>
            <person name="Khamispour A."/>
            <person name="Dowlati Y."/>
            <person name="Jianping S."/>
            <person name="Rea T.H."/>
            <person name="Vera-Cabrera L."/>
            <person name="Stefani M.M."/>
            <person name="Banu S."/>
            <person name="Macdonald M."/>
            <person name="Sapkota B.R."/>
            <person name="Spencer J.S."/>
            <person name="Thomas J."/>
            <person name="Harshman K."/>
            <person name="Singh P."/>
            <person name="Busso P."/>
            <person name="Gattiker A."/>
            <person name="Rougemont J."/>
            <person name="Brennan P.J."/>
            <person name="Cole S.T."/>
        </authorList>
    </citation>
    <scope>NUCLEOTIDE SEQUENCE [LARGE SCALE GENOMIC DNA]</scope>
    <source>
        <strain>Br4923</strain>
    </source>
</reference>
<evidence type="ECO:0000255" key="1">
    <source>
        <dbReference type="HAMAP-Rule" id="MF_00052"/>
    </source>
</evidence>
<evidence type="ECO:0000255" key="2">
    <source>
        <dbReference type="PROSITE-ProRule" id="PRU01319"/>
    </source>
</evidence>
<gene>
    <name evidence="1" type="primary">rnhB</name>
    <name type="ordered locus">MLBr01611</name>
</gene>
<organism>
    <name type="scientific">Mycobacterium leprae (strain Br4923)</name>
    <dbReference type="NCBI Taxonomy" id="561304"/>
    <lineage>
        <taxon>Bacteria</taxon>
        <taxon>Bacillati</taxon>
        <taxon>Actinomycetota</taxon>
        <taxon>Actinomycetes</taxon>
        <taxon>Mycobacteriales</taxon>
        <taxon>Mycobacteriaceae</taxon>
        <taxon>Mycobacterium</taxon>
    </lineage>
</organism>
<proteinExistence type="inferred from homology"/>
<dbReference type="EC" id="3.1.26.4" evidence="1"/>
<dbReference type="EMBL" id="FM211192">
    <property type="protein sequence ID" value="CAR71706.1"/>
    <property type="molecule type" value="Genomic_DNA"/>
</dbReference>
<dbReference type="SMR" id="B8ZRW3"/>
<dbReference type="KEGG" id="mlb:MLBr01611"/>
<dbReference type="HOGENOM" id="CLU_036532_1_0_11"/>
<dbReference type="Proteomes" id="UP000006900">
    <property type="component" value="Chromosome"/>
</dbReference>
<dbReference type="GO" id="GO:0005737">
    <property type="term" value="C:cytoplasm"/>
    <property type="evidence" value="ECO:0007669"/>
    <property type="project" value="UniProtKB-SubCell"/>
</dbReference>
<dbReference type="GO" id="GO:0032299">
    <property type="term" value="C:ribonuclease H2 complex"/>
    <property type="evidence" value="ECO:0007669"/>
    <property type="project" value="TreeGrafter"/>
</dbReference>
<dbReference type="GO" id="GO:0030145">
    <property type="term" value="F:manganese ion binding"/>
    <property type="evidence" value="ECO:0007669"/>
    <property type="project" value="UniProtKB-UniRule"/>
</dbReference>
<dbReference type="GO" id="GO:0003723">
    <property type="term" value="F:RNA binding"/>
    <property type="evidence" value="ECO:0007669"/>
    <property type="project" value="InterPro"/>
</dbReference>
<dbReference type="GO" id="GO:0004523">
    <property type="term" value="F:RNA-DNA hybrid ribonuclease activity"/>
    <property type="evidence" value="ECO:0007669"/>
    <property type="project" value="UniProtKB-UniRule"/>
</dbReference>
<dbReference type="GO" id="GO:0043137">
    <property type="term" value="P:DNA replication, removal of RNA primer"/>
    <property type="evidence" value="ECO:0007669"/>
    <property type="project" value="TreeGrafter"/>
</dbReference>
<dbReference type="GO" id="GO:0006298">
    <property type="term" value="P:mismatch repair"/>
    <property type="evidence" value="ECO:0007669"/>
    <property type="project" value="TreeGrafter"/>
</dbReference>
<dbReference type="CDD" id="cd07182">
    <property type="entry name" value="RNase_HII_bacteria_HII_like"/>
    <property type="match status" value="1"/>
</dbReference>
<dbReference type="FunFam" id="3.30.420.10:FF:000113">
    <property type="entry name" value="Ribonuclease HII"/>
    <property type="match status" value="1"/>
</dbReference>
<dbReference type="Gene3D" id="3.30.420.10">
    <property type="entry name" value="Ribonuclease H-like superfamily/Ribonuclease H"/>
    <property type="match status" value="1"/>
</dbReference>
<dbReference type="HAMAP" id="MF_00052_B">
    <property type="entry name" value="RNase_HII_B"/>
    <property type="match status" value="1"/>
</dbReference>
<dbReference type="InterPro" id="IPR022898">
    <property type="entry name" value="RNase_HII"/>
</dbReference>
<dbReference type="InterPro" id="IPR001352">
    <property type="entry name" value="RNase_HII/HIII"/>
</dbReference>
<dbReference type="InterPro" id="IPR024567">
    <property type="entry name" value="RNase_HII/HIII_dom"/>
</dbReference>
<dbReference type="InterPro" id="IPR012337">
    <property type="entry name" value="RNaseH-like_sf"/>
</dbReference>
<dbReference type="InterPro" id="IPR036397">
    <property type="entry name" value="RNaseH_sf"/>
</dbReference>
<dbReference type="NCBIfam" id="NF000595">
    <property type="entry name" value="PRK00015.1-3"/>
    <property type="match status" value="1"/>
</dbReference>
<dbReference type="NCBIfam" id="NF000598">
    <property type="entry name" value="PRK00015.2-2"/>
    <property type="match status" value="1"/>
</dbReference>
<dbReference type="NCBIfam" id="NF000600">
    <property type="entry name" value="PRK00015.2-4"/>
    <property type="match status" value="1"/>
</dbReference>
<dbReference type="PANTHER" id="PTHR10954">
    <property type="entry name" value="RIBONUCLEASE H2 SUBUNIT A"/>
    <property type="match status" value="1"/>
</dbReference>
<dbReference type="PANTHER" id="PTHR10954:SF18">
    <property type="entry name" value="RIBONUCLEASE HII"/>
    <property type="match status" value="1"/>
</dbReference>
<dbReference type="Pfam" id="PF01351">
    <property type="entry name" value="RNase_HII"/>
    <property type="match status" value="1"/>
</dbReference>
<dbReference type="SUPFAM" id="SSF53098">
    <property type="entry name" value="Ribonuclease H-like"/>
    <property type="match status" value="1"/>
</dbReference>
<dbReference type="PROSITE" id="PS51975">
    <property type="entry name" value="RNASE_H_2"/>
    <property type="match status" value="1"/>
</dbReference>
<feature type="chain" id="PRO_1000117679" description="Ribonuclease HII">
    <location>
        <begin position="1"/>
        <end position="240"/>
    </location>
</feature>
<feature type="domain" description="RNase H type-2" evidence="2">
    <location>
        <begin position="33"/>
        <end position="222"/>
    </location>
</feature>
<feature type="binding site" evidence="1">
    <location>
        <position position="39"/>
    </location>
    <ligand>
        <name>a divalent metal cation</name>
        <dbReference type="ChEBI" id="CHEBI:60240"/>
    </ligand>
</feature>
<feature type="binding site" evidence="1">
    <location>
        <position position="40"/>
    </location>
    <ligand>
        <name>a divalent metal cation</name>
        <dbReference type="ChEBI" id="CHEBI:60240"/>
    </ligand>
</feature>
<feature type="binding site" evidence="1">
    <location>
        <position position="131"/>
    </location>
    <ligand>
        <name>a divalent metal cation</name>
        <dbReference type="ChEBI" id="CHEBI:60240"/>
    </ligand>
</feature>
<sequence length="240" mass="25600">MATTWPPCRIIRKSGGLRGMWTLEYELQRSGLGPVAGVDEVGRGACAGPLVVAACVLGPGRLEESLDDSKKLSAKGREMLFPLICRYALAYHVVFIPSVEVDRHGVQVANIEGMRRAVAGLSVRPGYVLSDGFRVPGLSVPSLPVVGGDAVVACIAAASVLAKVSRDRLMVAMDADYPGYGFAAHKGYCTRAHSLALTQLGPCPEHRYSFINVRRIVTRSNTRAVAGFTPAPPAEHGECR</sequence>
<accession>B8ZRW3</accession>
<comment type="function">
    <text evidence="1">Endonuclease that specifically degrades the RNA of RNA-DNA hybrids.</text>
</comment>
<comment type="catalytic activity">
    <reaction evidence="1">
        <text>Endonucleolytic cleavage to 5'-phosphomonoester.</text>
        <dbReference type="EC" id="3.1.26.4"/>
    </reaction>
</comment>
<comment type="cofactor">
    <cofactor evidence="1">
        <name>Mn(2+)</name>
        <dbReference type="ChEBI" id="CHEBI:29035"/>
    </cofactor>
    <cofactor evidence="1">
        <name>Mg(2+)</name>
        <dbReference type="ChEBI" id="CHEBI:18420"/>
    </cofactor>
    <text evidence="1">Manganese or magnesium. Binds 1 divalent metal ion per monomer in the absence of substrate. May bind a second metal ion after substrate binding.</text>
</comment>
<comment type="subcellular location">
    <subcellularLocation>
        <location evidence="1">Cytoplasm</location>
    </subcellularLocation>
</comment>
<comment type="similarity">
    <text evidence="1">Belongs to the RNase HII family.</text>
</comment>
<keyword id="KW-0963">Cytoplasm</keyword>
<keyword id="KW-0255">Endonuclease</keyword>
<keyword id="KW-0378">Hydrolase</keyword>
<keyword id="KW-0464">Manganese</keyword>
<keyword id="KW-0479">Metal-binding</keyword>
<keyword id="KW-0540">Nuclease</keyword>
<protein>
    <recommendedName>
        <fullName evidence="1">Ribonuclease HII</fullName>
        <shortName evidence="1">RNase HII</shortName>
        <ecNumber evidence="1">3.1.26.4</ecNumber>
    </recommendedName>
</protein>
<name>RNH2_MYCLB</name>